<dbReference type="EC" id="2.6.1.42"/>
<dbReference type="EMBL" id="L42023">
    <property type="protein sequence ID" value="AAC22845.1"/>
    <property type="molecule type" value="Genomic_DNA"/>
</dbReference>
<dbReference type="PIR" id="A64189">
    <property type="entry name" value="A64189"/>
</dbReference>
<dbReference type="RefSeq" id="NP_439349.1">
    <property type="nucleotide sequence ID" value="NC_000907.1"/>
</dbReference>
<dbReference type="SMR" id="P54689"/>
<dbReference type="STRING" id="71421.HI_1193"/>
<dbReference type="EnsemblBacteria" id="AAC22845">
    <property type="protein sequence ID" value="AAC22845"/>
    <property type="gene ID" value="HI_1193"/>
</dbReference>
<dbReference type="KEGG" id="hin:HI_1193"/>
<dbReference type="PATRIC" id="fig|71421.8.peg.1245"/>
<dbReference type="eggNOG" id="COG0115">
    <property type="taxonomic scope" value="Bacteria"/>
</dbReference>
<dbReference type="HOGENOM" id="CLU_031922_1_0_6"/>
<dbReference type="OrthoDB" id="9804984at2"/>
<dbReference type="PhylomeDB" id="P54689"/>
<dbReference type="BioCyc" id="HINF71421:G1GJ1-1224-MONOMER"/>
<dbReference type="UniPathway" id="UPA00047">
    <property type="reaction ID" value="UER00058"/>
</dbReference>
<dbReference type="UniPathway" id="UPA00048">
    <property type="reaction ID" value="UER00073"/>
</dbReference>
<dbReference type="UniPathway" id="UPA00049">
    <property type="reaction ID" value="UER00062"/>
</dbReference>
<dbReference type="Proteomes" id="UP000000579">
    <property type="component" value="Chromosome"/>
</dbReference>
<dbReference type="GO" id="GO:0004084">
    <property type="term" value="F:branched-chain-amino-acid transaminase activity"/>
    <property type="evidence" value="ECO:0000318"/>
    <property type="project" value="GO_Central"/>
</dbReference>
<dbReference type="GO" id="GO:0052656">
    <property type="term" value="F:L-isoleucine-2-oxoglutarate transaminase activity"/>
    <property type="evidence" value="ECO:0007669"/>
    <property type="project" value="RHEA"/>
</dbReference>
<dbReference type="GO" id="GO:0052654">
    <property type="term" value="F:L-leucine-2-oxoglutarate transaminase activity"/>
    <property type="evidence" value="ECO:0007669"/>
    <property type="project" value="RHEA"/>
</dbReference>
<dbReference type="GO" id="GO:0052655">
    <property type="term" value="F:L-valine-2-oxoglutarate transaminase activity"/>
    <property type="evidence" value="ECO:0007669"/>
    <property type="project" value="RHEA"/>
</dbReference>
<dbReference type="GO" id="GO:0009097">
    <property type="term" value="P:isoleucine biosynthetic process"/>
    <property type="evidence" value="ECO:0007669"/>
    <property type="project" value="UniProtKB-UniPathway"/>
</dbReference>
<dbReference type="GO" id="GO:0009098">
    <property type="term" value="P:L-leucine biosynthetic process"/>
    <property type="evidence" value="ECO:0007669"/>
    <property type="project" value="UniProtKB-UniPathway"/>
</dbReference>
<dbReference type="GO" id="GO:0009099">
    <property type="term" value="P:L-valine biosynthetic process"/>
    <property type="evidence" value="ECO:0007669"/>
    <property type="project" value="UniProtKB-UniPathway"/>
</dbReference>
<dbReference type="CDD" id="cd01557">
    <property type="entry name" value="BCAT_beta_family"/>
    <property type="match status" value="1"/>
</dbReference>
<dbReference type="FunFam" id="3.20.10.10:FF:000006">
    <property type="entry name" value="Branched-chain amino acid aminotransferase"/>
    <property type="match status" value="1"/>
</dbReference>
<dbReference type="FunFam" id="3.30.470.10:FF:000004">
    <property type="entry name" value="Branched-chain-amino-acid aminotransferase"/>
    <property type="match status" value="1"/>
</dbReference>
<dbReference type="Gene3D" id="3.30.470.10">
    <property type="match status" value="1"/>
</dbReference>
<dbReference type="Gene3D" id="3.20.10.10">
    <property type="entry name" value="D-amino Acid Aminotransferase, subunit A, domain 2"/>
    <property type="match status" value="1"/>
</dbReference>
<dbReference type="InterPro" id="IPR001544">
    <property type="entry name" value="Aminotrans_IV"/>
</dbReference>
<dbReference type="InterPro" id="IPR018300">
    <property type="entry name" value="Aminotrans_IV_CS"/>
</dbReference>
<dbReference type="InterPro" id="IPR036038">
    <property type="entry name" value="Aminotransferase-like"/>
</dbReference>
<dbReference type="InterPro" id="IPR005786">
    <property type="entry name" value="B_amino_transII"/>
</dbReference>
<dbReference type="InterPro" id="IPR043132">
    <property type="entry name" value="BCAT-like_C"/>
</dbReference>
<dbReference type="InterPro" id="IPR043131">
    <property type="entry name" value="BCAT-like_N"/>
</dbReference>
<dbReference type="InterPro" id="IPR033939">
    <property type="entry name" value="BCAT_family"/>
</dbReference>
<dbReference type="NCBIfam" id="TIGR01123">
    <property type="entry name" value="ilvE_II"/>
    <property type="match status" value="1"/>
</dbReference>
<dbReference type="NCBIfam" id="NF009897">
    <property type="entry name" value="PRK13357.1"/>
    <property type="match status" value="1"/>
</dbReference>
<dbReference type="PANTHER" id="PTHR42825">
    <property type="entry name" value="AMINO ACID AMINOTRANSFERASE"/>
    <property type="match status" value="1"/>
</dbReference>
<dbReference type="PANTHER" id="PTHR42825:SF2">
    <property type="entry name" value="BRANCHED-CHAIN-AMINO-ACID AMINOTRANSFERASE 3, CHLOROPLASTIC-RELATED"/>
    <property type="match status" value="1"/>
</dbReference>
<dbReference type="Pfam" id="PF01063">
    <property type="entry name" value="Aminotran_4"/>
    <property type="match status" value="1"/>
</dbReference>
<dbReference type="PIRSF" id="PIRSF006468">
    <property type="entry name" value="BCAT1"/>
    <property type="match status" value="1"/>
</dbReference>
<dbReference type="SUPFAM" id="SSF56752">
    <property type="entry name" value="D-aminoacid aminotransferase-like PLP-dependent enzymes"/>
    <property type="match status" value="1"/>
</dbReference>
<dbReference type="PROSITE" id="PS00770">
    <property type="entry name" value="AA_TRANSFER_CLASS_4"/>
    <property type="match status" value="1"/>
</dbReference>
<protein>
    <recommendedName>
        <fullName>Branched-chain-amino-acid aminotransferase</fullName>
        <shortName>BCAT</shortName>
        <ecNumber>2.6.1.42</ecNumber>
    </recommendedName>
</protein>
<gene>
    <name type="primary">ilvE</name>
    <name type="ordered locus">HI_1193</name>
</gene>
<sequence length="343" mass="37900">MKDLDWNNLGFSYIKTDYRFIAHWKDGKWDEGKLTTDSTLHIHEGSTALHYGQQCFEGLKAYRCKDGSINLFRPQANAERMQRTADRLLMPRVPTELFVRACKEVVKANQDWLGPYGSGATLYLRPFLIGVGENIGVKTAPEFIFSVFCCPVGAYFKGGLAPSNFITTDYDRAAPMGTGGVKVGGNYAASLLPHELAAEQGTPERKFADAIYLDPKTHTKIEEVGAANFFGITKDNKFITPKSESILPSITKYSLLHIAKERLGMEAIEGDVYIDQLDQFVEAGACGTAAVITPVGGIQHNGKFHVFDSETEVGPVTRRLYDELTGIQFGDIEAPEGWIVKVE</sequence>
<proteinExistence type="inferred from homology"/>
<evidence type="ECO:0000250" key="1"/>
<evidence type="ECO:0000305" key="2"/>
<accession>P54689</accession>
<comment type="function">
    <text evidence="1">Acts on leucine, isoleucine and valine.</text>
</comment>
<comment type="catalytic activity">
    <reaction>
        <text>L-leucine + 2-oxoglutarate = 4-methyl-2-oxopentanoate + L-glutamate</text>
        <dbReference type="Rhea" id="RHEA:18321"/>
        <dbReference type="ChEBI" id="CHEBI:16810"/>
        <dbReference type="ChEBI" id="CHEBI:17865"/>
        <dbReference type="ChEBI" id="CHEBI:29985"/>
        <dbReference type="ChEBI" id="CHEBI:57427"/>
        <dbReference type="EC" id="2.6.1.42"/>
    </reaction>
</comment>
<comment type="catalytic activity">
    <reaction>
        <text>L-isoleucine + 2-oxoglutarate = (S)-3-methyl-2-oxopentanoate + L-glutamate</text>
        <dbReference type="Rhea" id="RHEA:24801"/>
        <dbReference type="ChEBI" id="CHEBI:16810"/>
        <dbReference type="ChEBI" id="CHEBI:29985"/>
        <dbReference type="ChEBI" id="CHEBI:35146"/>
        <dbReference type="ChEBI" id="CHEBI:58045"/>
        <dbReference type="EC" id="2.6.1.42"/>
    </reaction>
</comment>
<comment type="catalytic activity">
    <reaction>
        <text>L-valine + 2-oxoglutarate = 3-methyl-2-oxobutanoate + L-glutamate</text>
        <dbReference type="Rhea" id="RHEA:24813"/>
        <dbReference type="ChEBI" id="CHEBI:11851"/>
        <dbReference type="ChEBI" id="CHEBI:16810"/>
        <dbReference type="ChEBI" id="CHEBI:29985"/>
        <dbReference type="ChEBI" id="CHEBI:57762"/>
        <dbReference type="EC" id="2.6.1.42"/>
    </reaction>
</comment>
<comment type="cofactor">
    <cofactor>
        <name>pyridoxal 5'-phosphate</name>
        <dbReference type="ChEBI" id="CHEBI:597326"/>
    </cofactor>
</comment>
<comment type="pathway">
    <text>Amino-acid biosynthesis; L-isoleucine biosynthesis; L-isoleucine from 2-oxobutanoate: step 4/4.</text>
</comment>
<comment type="pathway">
    <text>Amino-acid biosynthesis; L-leucine biosynthesis; L-leucine from 3-methyl-2-oxobutanoate: step 4/4.</text>
</comment>
<comment type="pathway">
    <text>Amino-acid biosynthesis; L-valine biosynthesis; L-valine from pyruvate: step 4/4.</text>
</comment>
<comment type="similarity">
    <text evidence="2">Belongs to the class-IV pyridoxal-phosphate-dependent aminotransferase family.</text>
</comment>
<reference key="1">
    <citation type="journal article" date="1995" name="Science">
        <title>Whole-genome random sequencing and assembly of Haemophilus influenzae Rd.</title>
        <authorList>
            <person name="Fleischmann R.D."/>
            <person name="Adams M.D."/>
            <person name="White O."/>
            <person name="Clayton R.A."/>
            <person name="Kirkness E.F."/>
            <person name="Kerlavage A.R."/>
            <person name="Bult C.J."/>
            <person name="Tomb J.-F."/>
            <person name="Dougherty B.A."/>
            <person name="Merrick J.M."/>
            <person name="McKenney K."/>
            <person name="Sutton G.G."/>
            <person name="FitzHugh W."/>
            <person name="Fields C.A."/>
            <person name="Gocayne J.D."/>
            <person name="Scott J.D."/>
            <person name="Shirley R."/>
            <person name="Liu L.-I."/>
            <person name="Glodek A."/>
            <person name="Kelley J.M."/>
            <person name="Weidman J.F."/>
            <person name="Phillips C.A."/>
            <person name="Spriggs T."/>
            <person name="Hedblom E."/>
            <person name="Cotton M.D."/>
            <person name="Utterback T.R."/>
            <person name="Hanna M.C."/>
            <person name="Nguyen D.T."/>
            <person name="Saudek D.M."/>
            <person name="Brandon R.C."/>
            <person name="Fine L.D."/>
            <person name="Fritchman J.L."/>
            <person name="Fuhrmann J.L."/>
            <person name="Geoghagen N.S.M."/>
            <person name="Gnehm C.L."/>
            <person name="McDonald L.A."/>
            <person name="Small K.V."/>
            <person name="Fraser C.M."/>
            <person name="Smith H.O."/>
            <person name="Venter J.C."/>
        </authorList>
    </citation>
    <scope>NUCLEOTIDE SEQUENCE [LARGE SCALE GENOMIC DNA]</scope>
    <source>
        <strain>ATCC 51907 / DSM 11121 / KW20 / Rd</strain>
    </source>
</reference>
<organism>
    <name type="scientific">Haemophilus influenzae (strain ATCC 51907 / DSM 11121 / KW20 / Rd)</name>
    <dbReference type="NCBI Taxonomy" id="71421"/>
    <lineage>
        <taxon>Bacteria</taxon>
        <taxon>Pseudomonadati</taxon>
        <taxon>Pseudomonadota</taxon>
        <taxon>Gammaproteobacteria</taxon>
        <taxon>Pasteurellales</taxon>
        <taxon>Pasteurellaceae</taxon>
        <taxon>Haemophilus</taxon>
    </lineage>
</organism>
<feature type="chain" id="PRO_0000103267" description="Branched-chain-amino-acid aminotransferase">
    <location>
        <begin position="1"/>
        <end position="343"/>
    </location>
</feature>
<feature type="modified residue" description="N6-(pyridoxal phosphate)lysine" evidence="1">
    <location>
        <position position="182"/>
    </location>
</feature>
<name>ILVE_HAEIN</name>
<keyword id="KW-0028">Amino-acid biosynthesis</keyword>
<keyword id="KW-0032">Aminotransferase</keyword>
<keyword id="KW-0100">Branched-chain amino acid biosynthesis</keyword>
<keyword id="KW-0663">Pyridoxal phosphate</keyword>
<keyword id="KW-1185">Reference proteome</keyword>
<keyword id="KW-0808">Transferase</keyword>